<keyword id="KW-0067">ATP-binding</keyword>
<keyword id="KW-0090">Biological rhythms</keyword>
<keyword id="KW-0378">Hydrolase</keyword>
<keyword id="KW-0418">Kinase</keyword>
<keyword id="KW-0460">Magnesium</keyword>
<keyword id="KW-0479">Metal-binding</keyword>
<keyword id="KW-0547">Nucleotide-binding</keyword>
<keyword id="KW-0597">Phosphoprotein</keyword>
<keyword id="KW-0677">Repeat</keyword>
<keyword id="KW-0723">Serine/threonine-protein kinase</keyword>
<keyword id="KW-0804">Transcription</keyword>
<keyword id="KW-0805">Transcription regulation</keyword>
<keyword id="KW-0808">Transferase</keyword>
<feature type="chain" id="PRO_0000217784" description="Circadian clock oscillator protein KaiC">
    <location>
        <begin position="1"/>
        <end position="512"/>
    </location>
</feature>
<feature type="domain" description="KaiC 1" evidence="1">
    <location>
        <begin position="1"/>
        <end position="243"/>
    </location>
</feature>
<feature type="domain" description="KaiC 2" evidence="1">
    <location>
        <begin position="257"/>
        <end position="512"/>
    </location>
</feature>
<feature type="binding site" evidence="1">
    <location>
        <position position="45"/>
    </location>
    <ligand>
        <name>ATP</name>
        <dbReference type="ChEBI" id="CHEBI:30616"/>
        <label>1</label>
        <note>ligand shared between homodimeric partners</note>
    </ligand>
</feature>
<feature type="binding site" evidence="1">
    <location>
        <position position="46"/>
    </location>
    <ligand>
        <name>ATP</name>
        <dbReference type="ChEBI" id="CHEBI:30616"/>
        <label>1</label>
        <note>ligand shared between homodimeric partners</note>
    </ligand>
</feature>
<feature type="binding site" evidence="1">
    <location>
        <position position="47"/>
    </location>
    <ligand>
        <name>ATP</name>
        <dbReference type="ChEBI" id="CHEBI:30616"/>
        <label>1</label>
        <note>ligand shared between homodimeric partners</note>
    </ligand>
</feature>
<feature type="binding site" evidence="1">
    <location>
        <position position="48"/>
    </location>
    <ligand>
        <name>ATP</name>
        <dbReference type="ChEBI" id="CHEBI:30616"/>
        <label>1</label>
        <note>ligand shared between homodimeric partners</note>
    </ligand>
</feature>
<feature type="binding site" evidence="1">
    <location>
        <position position="49"/>
    </location>
    <ligand>
        <name>ATP</name>
        <dbReference type="ChEBI" id="CHEBI:30616"/>
        <label>1</label>
        <note>ligand shared between homodimeric partners</note>
    </ligand>
</feature>
<feature type="binding site" evidence="1">
    <location>
        <position position="49"/>
    </location>
    <ligand>
        <name>Mg(2+)</name>
        <dbReference type="ChEBI" id="CHEBI:18420"/>
        <label>1</label>
    </ligand>
</feature>
<feature type="binding site" evidence="1">
    <location>
        <position position="85"/>
    </location>
    <ligand>
        <name>ATP</name>
        <dbReference type="ChEBI" id="CHEBI:30616"/>
        <label>1</label>
        <note>ligand shared between homodimeric partners</note>
    </ligand>
</feature>
<feature type="binding site" evidence="1">
    <location>
        <position position="220"/>
    </location>
    <ligand>
        <name>ATP</name>
        <dbReference type="ChEBI" id="CHEBI:30616"/>
        <label>1</label>
        <note>ligand shared between homodimeric partners</note>
    </ligand>
</feature>
<feature type="binding site" evidence="1">
    <location>
        <position position="221"/>
    </location>
    <ligand>
        <name>ATP</name>
        <dbReference type="ChEBI" id="CHEBI:30616"/>
        <label>1</label>
        <note>ligand shared between homodimeric partners</note>
    </ligand>
</feature>
<feature type="binding site" evidence="1">
    <location>
        <position position="222"/>
    </location>
    <ligand>
        <name>ATP</name>
        <dbReference type="ChEBI" id="CHEBI:30616"/>
        <label>1</label>
        <note>ligand shared between homodimeric partners</note>
    </ligand>
</feature>
<feature type="binding site" evidence="1">
    <location>
        <position position="224"/>
    </location>
    <ligand>
        <name>ATP</name>
        <dbReference type="ChEBI" id="CHEBI:30616"/>
        <label>1</label>
        <note>ligand shared between homodimeric partners</note>
    </ligand>
</feature>
<feature type="binding site" evidence="1">
    <location>
        <position position="226"/>
    </location>
    <ligand>
        <name>ATP</name>
        <dbReference type="ChEBI" id="CHEBI:30616"/>
        <label>1</label>
        <note>ligand shared between homodimeric partners</note>
    </ligand>
</feature>
<feature type="binding site" evidence="1">
    <location>
        <position position="286"/>
    </location>
    <ligand>
        <name>ATP</name>
        <dbReference type="ChEBI" id="CHEBI:30616"/>
        <label>2</label>
        <note>ligand shared between homodimeric partners</note>
    </ligand>
</feature>
<feature type="binding site" evidence="1">
    <location>
        <position position="287"/>
    </location>
    <ligand>
        <name>ATP</name>
        <dbReference type="ChEBI" id="CHEBI:30616"/>
        <label>2</label>
        <note>ligand shared between homodimeric partners</note>
    </ligand>
</feature>
<feature type="binding site" evidence="1">
    <location>
        <position position="288"/>
    </location>
    <ligand>
        <name>ATP</name>
        <dbReference type="ChEBI" id="CHEBI:30616"/>
        <label>2</label>
        <note>ligand shared between homodimeric partners</note>
    </ligand>
</feature>
<feature type="binding site" evidence="1">
    <location>
        <position position="289"/>
    </location>
    <ligand>
        <name>ATP</name>
        <dbReference type="ChEBI" id="CHEBI:30616"/>
        <label>2</label>
        <note>ligand shared between homodimeric partners</note>
    </ligand>
</feature>
<feature type="binding site" evidence="1">
    <location>
        <position position="290"/>
    </location>
    <ligand>
        <name>ATP</name>
        <dbReference type="ChEBI" id="CHEBI:30616"/>
        <label>2</label>
        <note>ligand shared between homodimeric partners</note>
    </ligand>
</feature>
<feature type="binding site" evidence="1">
    <location>
        <position position="291"/>
    </location>
    <ligand>
        <name>ATP</name>
        <dbReference type="ChEBI" id="CHEBI:30616"/>
        <label>2</label>
        <note>ligand shared between homodimeric partners</note>
    </ligand>
</feature>
<feature type="binding site" evidence="1">
    <location>
        <position position="291"/>
    </location>
    <ligand>
        <name>Mg(2+)</name>
        <dbReference type="ChEBI" id="CHEBI:18420"/>
        <label>2</label>
    </ligand>
</feature>
<feature type="binding site" evidence="1">
    <location>
        <position position="292"/>
    </location>
    <ligand>
        <name>ATP</name>
        <dbReference type="ChEBI" id="CHEBI:30616"/>
        <label>2</label>
        <note>ligand shared between homodimeric partners</note>
    </ligand>
</feature>
<feature type="binding site" evidence="1">
    <location>
        <position position="314"/>
    </location>
    <ligand>
        <name>Mg(2+)</name>
        <dbReference type="ChEBI" id="CHEBI:18420"/>
        <label>2</label>
    </ligand>
</feature>
<feature type="binding site" evidence="1">
    <location>
        <position position="327"/>
    </location>
    <ligand>
        <name>ATP</name>
        <dbReference type="ChEBI" id="CHEBI:30616"/>
        <label>2</label>
        <note>ligand shared between homodimeric partners</note>
    </ligand>
</feature>
<feature type="binding site" evidence="1">
    <location>
        <position position="447"/>
    </location>
    <ligand>
        <name>ATP</name>
        <dbReference type="ChEBI" id="CHEBI:30616"/>
        <label>2</label>
        <note>ligand shared between homodimeric partners</note>
    </ligand>
</feature>
<feature type="binding site" evidence="1">
    <location>
        <position position="453"/>
    </location>
    <ligand>
        <name>ATP</name>
        <dbReference type="ChEBI" id="CHEBI:30616"/>
        <label>2</label>
        <note>ligand shared between homodimeric partners</note>
    </ligand>
</feature>
<feature type="binding site" evidence="1">
    <location>
        <position position="454"/>
    </location>
    <ligand>
        <name>ATP</name>
        <dbReference type="ChEBI" id="CHEBI:30616"/>
        <label>2</label>
        <note>ligand shared between homodimeric partners</note>
    </ligand>
</feature>
<feature type="binding site" evidence="1">
    <location>
        <position position="455"/>
    </location>
    <ligand>
        <name>ATP</name>
        <dbReference type="ChEBI" id="CHEBI:30616"/>
        <label>2</label>
        <note>ligand shared between homodimeric partners</note>
    </ligand>
</feature>
<feature type="binding site" evidence="1">
    <location>
        <position position="457"/>
    </location>
    <ligand>
        <name>ATP</name>
        <dbReference type="ChEBI" id="CHEBI:30616"/>
        <label>2</label>
        <note>ligand shared between homodimeric partners</note>
    </ligand>
</feature>
<feature type="binding site" evidence="1">
    <location>
        <position position="459"/>
    </location>
    <ligand>
        <name>ATP</name>
        <dbReference type="ChEBI" id="CHEBI:30616"/>
        <label>2</label>
        <note>ligand shared between homodimeric partners</note>
    </ligand>
</feature>
<feature type="binding site" evidence="1">
    <location>
        <position position="461"/>
    </location>
    <ligand>
        <name>ATP</name>
        <dbReference type="ChEBI" id="CHEBI:30616"/>
        <label>2</label>
        <note>ligand shared between homodimeric partners</note>
    </ligand>
</feature>
<feature type="modified residue" description="Phosphoserine; by autocatalysis" evidence="1">
    <location>
        <position position="427"/>
    </location>
</feature>
<feature type="modified residue" description="Phosphothreonine; by autocatalysis" evidence="1">
    <location>
        <position position="428"/>
    </location>
</feature>
<protein>
    <recommendedName>
        <fullName evidence="1">Circadian clock oscillator protein KaiC</fullName>
        <ecNumber evidence="1">2.7.11.1</ecNumber>
        <ecNumber evidence="1">3.6.4.-</ecNumber>
    </recommendedName>
</protein>
<comment type="function">
    <text evidence="1">Central component of the KaiABC oscillator complex, which constitutes the main circadian regulator in cyanobacteria. Complex composition changes during the circadian cycle to control KaiC phosphorylation. KaiA stimulates KaiC autophosphorylation, while KaiB sequesters KaiA, leading to KaiC autodephosphorylation. Clock output pathways impact the RpaA transcriptional regulator. KaiC enhances the autophosphorylation activity of SasA, which then transfers its phosphate group to RpaA to activate it. KaiB and KaiC together enhance the phospho-RpaA dephosphatase activity of CikA.</text>
</comment>
<comment type="function">
    <text evidence="1">Has a weak, temperature-independent ATPase activity; ATPase activity defines the circadian period. The phosphorylation state of KaiC modulates its ATPase activity and effects KaiB binding.</text>
</comment>
<comment type="catalytic activity">
    <reaction evidence="1">
        <text>L-seryl-[protein] + ATP = O-phospho-L-seryl-[protein] + ADP + H(+)</text>
        <dbReference type="Rhea" id="RHEA:17989"/>
        <dbReference type="Rhea" id="RHEA-COMP:9863"/>
        <dbReference type="Rhea" id="RHEA-COMP:11604"/>
        <dbReference type="ChEBI" id="CHEBI:15378"/>
        <dbReference type="ChEBI" id="CHEBI:29999"/>
        <dbReference type="ChEBI" id="CHEBI:30616"/>
        <dbReference type="ChEBI" id="CHEBI:83421"/>
        <dbReference type="ChEBI" id="CHEBI:456216"/>
        <dbReference type="EC" id="2.7.11.1"/>
    </reaction>
</comment>
<comment type="catalytic activity">
    <reaction evidence="1">
        <text>L-threonyl-[protein] + ATP = O-phospho-L-threonyl-[protein] + ADP + H(+)</text>
        <dbReference type="Rhea" id="RHEA:46608"/>
        <dbReference type="Rhea" id="RHEA-COMP:11060"/>
        <dbReference type="Rhea" id="RHEA-COMP:11605"/>
        <dbReference type="ChEBI" id="CHEBI:15378"/>
        <dbReference type="ChEBI" id="CHEBI:30013"/>
        <dbReference type="ChEBI" id="CHEBI:30616"/>
        <dbReference type="ChEBI" id="CHEBI:61977"/>
        <dbReference type="ChEBI" id="CHEBI:456216"/>
        <dbReference type="EC" id="2.7.11.1"/>
    </reaction>
</comment>
<comment type="catalytic activity">
    <reaction evidence="1">
        <text>ATP + H2O = ADP + phosphate + H(+)</text>
        <dbReference type="Rhea" id="RHEA:13065"/>
        <dbReference type="ChEBI" id="CHEBI:15377"/>
        <dbReference type="ChEBI" id="CHEBI:15378"/>
        <dbReference type="ChEBI" id="CHEBI:30616"/>
        <dbReference type="ChEBI" id="CHEBI:43474"/>
        <dbReference type="ChEBI" id="CHEBI:456216"/>
    </reaction>
</comment>
<comment type="cofactor">
    <cofactor evidence="1">
        <name>Mg(2+)</name>
        <dbReference type="ChEBI" id="CHEBI:18420"/>
    </cofactor>
    <text evidence="1">Binds 2 Mg(2+) ions per subunit, one in each domain. Mg(2+) is required for hexamerization and phosphatase activity.</text>
</comment>
<comment type="activity regulation">
    <text evidence="1">The interaction with KaiA enhances its phosphorylation status, while the interaction with KaiB decreases it.</text>
</comment>
<comment type="subunit">
    <text evidence="1">Homohexamer; hexamerization is dependent on ATP-binding. The KaiABC complex composition changes during the circadian cycle to control KaiC phosphorylation. Complexes KaiC(6), KaiA(2-4):KaiC(6), KaiB(6):KaiC(6) and KaiC(6):KaiB(6):KaiA(12) are among the most important forms, many form cooperatively. KaiC interacts with SasA, activating its autokinase function and leading to RpaA activation.</text>
</comment>
<comment type="domain">
    <text evidence="1">In the homohexamer the 2 domains (called CI and CII) self-associate to each form a 'donut' layer; the compactness and local conformation of the domains varies over the cell cycle and impacts function. CII has the autokinase and autophosphatase activities, both CI and CII have (weak) ATPase activity; CI has the clock pacemaker role.</text>
</comment>
<comment type="PTM">
    <text evidence="1">Phosphorylated on serine and threonine residues by autocatalysis. Has a 4 step phosphorylation cycle; the autokinase acts first on Thr-428, then Ser-427. When Ser-427 is modified KaiC switches to an autophosphatase mode, acting first on phospho-Thr-428 then phospho-Ser-427.</text>
</comment>
<comment type="similarity">
    <text evidence="1">Belongs to the KaiC family.</text>
</comment>
<reference key="1">
    <citation type="journal article" date="2003" name="Nature">
        <title>The genome of a motile marine Synechococcus.</title>
        <authorList>
            <person name="Palenik B."/>
            <person name="Brahamsha B."/>
            <person name="Larimer F.W."/>
            <person name="Land M.L."/>
            <person name="Hauser L."/>
            <person name="Chain P."/>
            <person name="Lamerdin J.E."/>
            <person name="Regala W."/>
            <person name="Allen E.E."/>
            <person name="McCarren J."/>
            <person name="Paulsen I.T."/>
            <person name="Dufresne A."/>
            <person name="Partensky F."/>
            <person name="Webb E.A."/>
            <person name="Waterbury J."/>
        </authorList>
    </citation>
    <scope>NUCLEOTIDE SEQUENCE [LARGE SCALE GENOMIC DNA]</scope>
    <source>
        <strain>WH8102</strain>
    </source>
</reference>
<organism>
    <name type="scientific">Parasynechococcus marenigrum (strain WH8102)</name>
    <dbReference type="NCBI Taxonomy" id="84588"/>
    <lineage>
        <taxon>Bacteria</taxon>
        <taxon>Bacillati</taxon>
        <taxon>Cyanobacteriota</taxon>
        <taxon>Cyanophyceae</taxon>
        <taxon>Synechococcales</taxon>
        <taxon>Prochlorococcaceae</taxon>
        <taxon>Parasynechococcus</taxon>
        <taxon>Parasynechococcus marenigrum</taxon>
    </lineage>
</organism>
<sequence>MQFPPASGSTQMQVQKLPTGIEGFDDVCQGGLPIGRSTLISGTSGTGKTVFSLHFLHNGIKHFDEPGIFVTFEESPLDILRNAASFGWNLQEMVEQDKLFILDASPDPDGQDVAGSFDLSGLIERINYAIRKYKAKRVAIDSITAVFQQYDAVFVVRREIFRLIARLKEIGVTTVMTTERIDEYGPIARYGVEEFVSDNVVILRNVLEGERRRRTVEILKLRGTTHMKGEFPFTMGTHGISIFPLGAMRLTQRSSNVRVSSGVPRLDEMCGGGFFKDSIILATGATGTGKTLLVSKFIEDACRNKERAILFAYEESRAQLLRNGTSWGIDFEQMEQDGLLKIICAYPESTGLEDHLQIIKTDIGQFKPSRMAIDSLSALARGVSHNAFRQFVIGVTGYAKQEEIAGFFTNTSEEFMGSHSITDSHISTITDTILMLQYVEIRGEMARALNVFKMRGSWHDKGIREFVITGNGPQIKDSFSNFERIISGVPHRVTTDERSELSRIARGVSSED</sequence>
<evidence type="ECO:0000255" key="1">
    <source>
        <dbReference type="HAMAP-Rule" id="MF_01836"/>
    </source>
</evidence>
<dbReference type="EC" id="2.7.11.1" evidence="1"/>
<dbReference type="EC" id="3.6.4.-" evidence="1"/>
<dbReference type="EMBL" id="BX569690">
    <property type="protein sequence ID" value="CAE07065.1"/>
    <property type="molecule type" value="Genomic_DNA"/>
</dbReference>
<dbReference type="RefSeq" id="WP_011127419.1">
    <property type="nucleotide sequence ID" value="NC_005070.1"/>
</dbReference>
<dbReference type="SMR" id="Q7U8R3"/>
<dbReference type="STRING" id="84588.SYNW0550"/>
<dbReference type="KEGG" id="syw:SYNW0550"/>
<dbReference type="eggNOG" id="COG0467">
    <property type="taxonomic scope" value="Bacteria"/>
</dbReference>
<dbReference type="HOGENOM" id="CLU_023669_4_1_3"/>
<dbReference type="Proteomes" id="UP000001422">
    <property type="component" value="Chromosome"/>
</dbReference>
<dbReference type="GO" id="GO:0005524">
    <property type="term" value="F:ATP binding"/>
    <property type="evidence" value="ECO:0007669"/>
    <property type="project" value="UniProtKB-UniRule"/>
</dbReference>
<dbReference type="GO" id="GO:0016887">
    <property type="term" value="F:ATP hydrolysis activity"/>
    <property type="evidence" value="ECO:0007669"/>
    <property type="project" value="RHEA"/>
</dbReference>
<dbReference type="GO" id="GO:0003677">
    <property type="term" value="F:DNA binding"/>
    <property type="evidence" value="ECO:0007669"/>
    <property type="project" value="InterPro"/>
</dbReference>
<dbReference type="GO" id="GO:0000287">
    <property type="term" value="F:magnesium ion binding"/>
    <property type="evidence" value="ECO:0007669"/>
    <property type="project" value="UniProtKB-UniRule"/>
</dbReference>
<dbReference type="GO" id="GO:0106310">
    <property type="term" value="F:protein serine kinase activity"/>
    <property type="evidence" value="ECO:0007669"/>
    <property type="project" value="RHEA"/>
</dbReference>
<dbReference type="GO" id="GO:0004674">
    <property type="term" value="F:protein serine/threonine kinase activity"/>
    <property type="evidence" value="ECO:0007669"/>
    <property type="project" value="UniProtKB-KW"/>
</dbReference>
<dbReference type="GO" id="GO:0004712">
    <property type="term" value="F:protein serine/threonine/tyrosine kinase activity"/>
    <property type="evidence" value="ECO:0007669"/>
    <property type="project" value="UniProtKB-UniRule"/>
</dbReference>
<dbReference type="GO" id="GO:0007623">
    <property type="term" value="P:circadian rhythm"/>
    <property type="evidence" value="ECO:0007669"/>
    <property type="project" value="UniProtKB-UniRule"/>
</dbReference>
<dbReference type="GO" id="GO:0042752">
    <property type="term" value="P:regulation of circadian rhythm"/>
    <property type="evidence" value="ECO:0007669"/>
    <property type="project" value="InterPro"/>
</dbReference>
<dbReference type="GO" id="GO:0006355">
    <property type="term" value="P:regulation of DNA-templated transcription"/>
    <property type="evidence" value="ECO:0007669"/>
    <property type="project" value="InterPro"/>
</dbReference>
<dbReference type="CDD" id="cd19485">
    <property type="entry name" value="KaiC-N"/>
    <property type="match status" value="1"/>
</dbReference>
<dbReference type="CDD" id="cd19484">
    <property type="entry name" value="KaiC_C"/>
    <property type="match status" value="1"/>
</dbReference>
<dbReference type="Gene3D" id="3.40.50.300">
    <property type="entry name" value="P-loop containing nucleotide triphosphate hydrolases"/>
    <property type="match status" value="2"/>
</dbReference>
<dbReference type="HAMAP" id="MF_01836">
    <property type="entry name" value="KaiC"/>
    <property type="match status" value="1"/>
</dbReference>
<dbReference type="InterPro" id="IPR051347">
    <property type="entry name" value="Circadian_clock_KaiC-rel"/>
</dbReference>
<dbReference type="InterPro" id="IPR013503">
    <property type="entry name" value="Circadian_KaiC_bact"/>
</dbReference>
<dbReference type="InterPro" id="IPR030665">
    <property type="entry name" value="KaiC"/>
</dbReference>
<dbReference type="InterPro" id="IPR014774">
    <property type="entry name" value="KaiC-like_dom"/>
</dbReference>
<dbReference type="InterPro" id="IPR047222">
    <property type="entry name" value="KaiC_C"/>
</dbReference>
<dbReference type="InterPro" id="IPR010624">
    <property type="entry name" value="KaiC_dom"/>
</dbReference>
<dbReference type="InterPro" id="IPR047221">
    <property type="entry name" value="KaiC_N"/>
</dbReference>
<dbReference type="InterPro" id="IPR027417">
    <property type="entry name" value="P-loop_NTPase"/>
</dbReference>
<dbReference type="NCBIfam" id="TIGR02655">
    <property type="entry name" value="circ_KaiC"/>
    <property type="match status" value="1"/>
</dbReference>
<dbReference type="NCBIfam" id="NF006799">
    <property type="entry name" value="PRK09302.1"/>
    <property type="match status" value="1"/>
</dbReference>
<dbReference type="PANTHER" id="PTHR42926">
    <property type="match status" value="1"/>
</dbReference>
<dbReference type="PANTHER" id="PTHR42926:SF1">
    <property type="entry name" value="CIRCADIAN CLOCK OSCILLATOR PROTEIN KAIC 1"/>
    <property type="match status" value="1"/>
</dbReference>
<dbReference type="Pfam" id="PF06745">
    <property type="entry name" value="ATPase"/>
    <property type="match status" value="2"/>
</dbReference>
<dbReference type="PIRSF" id="PIRSF039117">
    <property type="entry name" value="KaiC"/>
    <property type="match status" value="1"/>
</dbReference>
<dbReference type="SUPFAM" id="SSF52540">
    <property type="entry name" value="P-loop containing nucleoside triphosphate hydrolases"/>
    <property type="match status" value="2"/>
</dbReference>
<dbReference type="PROSITE" id="PS51146">
    <property type="entry name" value="KAIC"/>
    <property type="match status" value="2"/>
</dbReference>
<accession>Q7U8R3</accession>
<proteinExistence type="inferred from homology"/>
<gene>
    <name evidence="1" type="primary">kaiC</name>
    <name type="ordered locus">SYNW0550</name>
</gene>
<name>KAIC_PARMW</name>